<comment type="function">
    <text>Repressor of the glycerol-3-phosphate regulon.</text>
</comment>
<proteinExistence type="predicted"/>
<name>GLPR_SHIFL</name>
<organism>
    <name type="scientific">Shigella flexneri</name>
    <dbReference type="NCBI Taxonomy" id="623"/>
    <lineage>
        <taxon>Bacteria</taxon>
        <taxon>Pseudomonadati</taxon>
        <taxon>Pseudomonadota</taxon>
        <taxon>Gammaproteobacteria</taxon>
        <taxon>Enterobacterales</taxon>
        <taxon>Enterobacteriaceae</taxon>
        <taxon>Shigella</taxon>
    </lineage>
</organism>
<feature type="chain" id="PRO_0000050252" description="Glycerol-3-phosphate regulon repressor">
    <location>
        <begin position="1"/>
        <end position="252"/>
    </location>
</feature>
<feature type="domain" description="HTH deoR-type" evidence="1">
    <location>
        <begin position="3"/>
        <end position="58"/>
    </location>
</feature>
<feature type="DNA-binding region" description="H-T-H motif" evidence="1">
    <location>
        <begin position="20"/>
        <end position="39"/>
    </location>
</feature>
<gene>
    <name type="primary">glpR</name>
    <name type="ordered locus">SF3445</name>
    <name type="ordered locus">S4319</name>
</gene>
<sequence length="252" mass="28048">MKQTQRHNGIIELVKQQGYVSTEELVEHFSVSPQTIRRDLNELAEQNLILRHHGGAALPSSSVNTPWHDRKATQTEEKERIARKVAEQIPNGSTLFIDIGTTPEAVAHALLNHSNLRIVTNNLNVANTLMVKEDFRIILAGGELRSRDGGIIGEATLDFISQFRLDFGILGISGIDSDGSLLEFDYHEVRTKRAIIENSRHVMLVVDHSKFGRNAMVNMGSISMVDAVYTDAPPPVSVMQVLTDHHIQLELC</sequence>
<accession>P0ACL1</accession>
<accession>P09392</accession>
<keyword id="KW-0238">DNA-binding</keyword>
<keyword id="KW-0319">Glycerol metabolism</keyword>
<keyword id="KW-1185">Reference proteome</keyword>
<keyword id="KW-0678">Repressor</keyword>
<keyword id="KW-0804">Transcription</keyword>
<keyword id="KW-0805">Transcription regulation</keyword>
<evidence type="ECO:0000255" key="1">
    <source>
        <dbReference type="PROSITE-ProRule" id="PRU00349"/>
    </source>
</evidence>
<reference key="1">
    <citation type="journal article" date="2002" name="Nucleic Acids Res.">
        <title>Genome sequence of Shigella flexneri 2a: insights into pathogenicity through comparison with genomes of Escherichia coli K12 and O157.</title>
        <authorList>
            <person name="Jin Q."/>
            <person name="Yuan Z."/>
            <person name="Xu J."/>
            <person name="Wang Y."/>
            <person name="Shen Y."/>
            <person name="Lu W."/>
            <person name="Wang J."/>
            <person name="Liu H."/>
            <person name="Yang J."/>
            <person name="Yang F."/>
            <person name="Zhang X."/>
            <person name="Zhang J."/>
            <person name="Yang G."/>
            <person name="Wu H."/>
            <person name="Qu D."/>
            <person name="Dong J."/>
            <person name="Sun L."/>
            <person name="Xue Y."/>
            <person name="Zhao A."/>
            <person name="Gao Y."/>
            <person name="Zhu J."/>
            <person name="Kan B."/>
            <person name="Ding K."/>
            <person name="Chen S."/>
            <person name="Cheng H."/>
            <person name="Yao Z."/>
            <person name="He B."/>
            <person name="Chen R."/>
            <person name="Ma D."/>
            <person name="Qiang B."/>
            <person name="Wen Y."/>
            <person name="Hou Y."/>
            <person name="Yu J."/>
        </authorList>
    </citation>
    <scope>NUCLEOTIDE SEQUENCE [LARGE SCALE GENOMIC DNA]</scope>
    <source>
        <strain>301 / Serotype 2a</strain>
    </source>
</reference>
<reference key="2">
    <citation type="journal article" date="2003" name="Infect. Immun.">
        <title>Complete genome sequence and comparative genomics of Shigella flexneri serotype 2a strain 2457T.</title>
        <authorList>
            <person name="Wei J."/>
            <person name="Goldberg M.B."/>
            <person name="Burland V."/>
            <person name="Venkatesan M.M."/>
            <person name="Deng W."/>
            <person name="Fournier G."/>
            <person name="Mayhew G.F."/>
            <person name="Plunkett G. III"/>
            <person name="Rose D.J."/>
            <person name="Darling A."/>
            <person name="Mau B."/>
            <person name="Perna N.T."/>
            <person name="Payne S.M."/>
            <person name="Runyen-Janecky L.J."/>
            <person name="Zhou S."/>
            <person name="Schwartz D.C."/>
            <person name="Blattner F.R."/>
        </authorList>
    </citation>
    <scope>NUCLEOTIDE SEQUENCE [LARGE SCALE GENOMIC DNA]</scope>
    <source>
        <strain>ATCC 700930 / 2457T / Serotype 2a</strain>
    </source>
</reference>
<dbReference type="EMBL" id="AE005674">
    <property type="protein sequence ID" value="AAN44905.1"/>
    <property type="molecule type" value="Genomic_DNA"/>
</dbReference>
<dbReference type="EMBL" id="AE014073">
    <property type="protein sequence ID" value="AAP19276.1"/>
    <property type="molecule type" value="Genomic_DNA"/>
</dbReference>
<dbReference type="RefSeq" id="NP_709198.1">
    <property type="nucleotide sequence ID" value="NC_004337.2"/>
</dbReference>
<dbReference type="RefSeq" id="WP_000815099.1">
    <property type="nucleotide sequence ID" value="NZ_WPGW01000066.1"/>
</dbReference>
<dbReference type="SMR" id="P0ACL1"/>
<dbReference type="STRING" id="198214.SF3445"/>
<dbReference type="PaxDb" id="198214-SF3445"/>
<dbReference type="GeneID" id="1026465"/>
<dbReference type="KEGG" id="sfl:SF3445"/>
<dbReference type="KEGG" id="sfx:S4319"/>
<dbReference type="PATRIC" id="fig|198214.7.peg.4064"/>
<dbReference type="HOGENOM" id="CLU_060699_0_0_6"/>
<dbReference type="Proteomes" id="UP000001006">
    <property type="component" value="Chromosome"/>
</dbReference>
<dbReference type="Proteomes" id="UP000002673">
    <property type="component" value="Chromosome"/>
</dbReference>
<dbReference type="GO" id="GO:0003677">
    <property type="term" value="F:DNA binding"/>
    <property type="evidence" value="ECO:0007669"/>
    <property type="project" value="UniProtKB-KW"/>
</dbReference>
<dbReference type="GO" id="GO:0003700">
    <property type="term" value="F:DNA-binding transcription factor activity"/>
    <property type="evidence" value="ECO:0007669"/>
    <property type="project" value="InterPro"/>
</dbReference>
<dbReference type="GO" id="GO:0006071">
    <property type="term" value="P:glycerol metabolic process"/>
    <property type="evidence" value="ECO:0007669"/>
    <property type="project" value="UniProtKB-KW"/>
</dbReference>
<dbReference type="FunFam" id="1.10.10.10:FF:000081">
    <property type="entry name" value="DeoR/GlpR family transcriptional regulator"/>
    <property type="match status" value="1"/>
</dbReference>
<dbReference type="FunFam" id="3.30.750.70:FF:000001">
    <property type="entry name" value="DeoR/GlpR family transcriptional regulator"/>
    <property type="match status" value="1"/>
</dbReference>
<dbReference type="Gene3D" id="3.30.750.70">
    <property type="entry name" value="4-hydroxybutyrate coenzyme like domains"/>
    <property type="match status" value="1"/>
</dbReference>
<dbReference type="Gene3D" id="1.10.10.10">
    <property type="entry name" value="Winged helix-like DNA-binding domain superfamily/Winged helix DNA-binding domain"/>
    <property type="match status" value="1"/>
</dbReference>
<dbReference type="InterPro" id="IPR050313">
    <property type="entry name" value="Carb_Metab_HTH_regulators"/>
</dbReference>
<dbReference type="InterPro" id="IPR014036">
    <property type="entry name" value="DeoR-like_C"/>
</dbReference>
<dbReference type="InterPro" id="IPR001034">
    <property type="entry name" value="DeoR_HTH"/>
</dbReference>
<dbReference type="InterPro" id="IPR037171">
    <property type="entry name" value="NagB/RpiA_transferase-like"/>
</dbReference>
<dbReference type="InterPro" id="IPR018356">
    <property type="entry name" value="Tscrpt_reg_HTH_DeoR_CS"/>
</dbReference>
<dbReference type="InterPro" id="IPR036388">
    <property type="entry name" value="WH-like_DNA-bd_sf"/>
</dbReference>
<dbReference type="InterPro" id="IPR036390">
    <property type="entry name" value="WH_DNA-bd_sf"/>
</dbReference>
<dbReference type="NCBIfam" id="NF008154">
    <property type="entry name" value="PRK10906.1"/>
    <property type="match status" value="1"/>
</dbReference>
<dbReference type="PANTHER" id="PTHR30363:SF4">
    <property type="entry name" value="GLYCEROL-3-PHOSPHATE REGULON REPRESSOR"/>
    <property type="match status" value="1"/>
</dbReference>
<dbReference type="PANTHER" id="PTHR30363">
    <property type="entry name" value="HTH-TYPE TRANSCRIPTIONAL REGULATOR SRLR-RELATED"/>
    <property type="match status" value="1"/>
</dbReference>
<dbReference type="Pfam" id="PF00455">
    <property type="entry name" value="DeoRC"/>
    <property type="match status" value="1"/>
</dbReference>
<dbReference type="Pfam" id="PF08220">
    <property type="entry name" value="HTH_DeoR"/>
    <property type="match status" value="1"/>
</dbReference>
<dbReference type="PRINTS" id="PR00037">
    <property type="entry name" value="HTHLACR"/>
</dbReference>
<dbReference type="SMART" id="SM01134">
    <property type="entry name" value="DeoRC"/>
    <property type="match status" value="1"/>
</dbReference>
<dbReference type="SMART" id="SM00420">
    <property type="entry name" value="HTH_DEOR"/>
    <property type="match status" value="1"/>
</dbReference>
<dbReference type="SUPFAM" id="SSF100950">
    <property type="entry name" value="NagB/RpiA/CoA transferase-like"/>
    <property type="match status" value="1"/>
</dbReference>
<dbReference type="SUPFAM" id="SSF46785">
    <property type="entry name" value="Winged helix' DNA-binding domain"/>
    <property type="match status" value="1"/>
</dbReference>
<dbReference type="PROSITE" id="PS00894">
    <property type="entry name" value="HTH_DEOR_1"/>
    <property type="match status" value="1"/>
</dbReference>
<dbReference type="PROSITE" id="PS51000">
    <property type="entry name" value="HTH_DEOR_2"/>
    <property type="match status" value="1"/>
</dbReference>
<protein>
    <recommendedName>
        <fullName>Glycerol-3-phosphate regulon repressor</fullName>
    </recommendedName>
</protein>